<protein>
    <recommendedName>
        <fullName>Transmembrane protein 170A</fullName>
    </recommendedName>
</protein>
<evidence type="ECO:0000250" key="1">
    <source>
        <dbReference type="UniProtKB" id="Q8WVE7"/>
    </source>
</evidence>
<evidence type="ECO:0000255" key="2"/>
<evidence type="ECO:0000305" key="3"/>
<dbReference type="EMBL" id="AJ719553">
    <property type="protein sequence ID" value="CAG31212.1"/>
    <property type="molecule type" value="mRNA"/>
</dbReference>
<dbReference type="EMBL" id="AJ719583">
    <property type="protein sequence ID" value="CAG31242.1"/>
    <property type="status" value="ALT_INIT"/>
    <property type="molecule type" value="mRNA"/>
</dbReference>
<dbReference type="RefSeq" id="NP_001074349.1">
    <property type="nucleotide sequence ID" value="NM_001080880.1"/>
</dbReference>
<dbReference type="FunCoup" id="Q5ZM31">
    <property type="interactions" value="917"/>
</dbReference>
<dbReference type="STRING" id="9031.ENSGALP00000004506"/>
<dbReference type="GlyCosmos" id="Q5ZM31">
    <property type="glycosylation" value="1 site, No reported glycans"/>
</dbReference>
<dbReference type="GlyGen" id="Q5ZM31">
    <property type="glycosylation" value="1 site"/>
</dbReference>
<dbReference type="PaxDb" id="9031-ENSGALP00000004506"/>
<dbReference type="GeneID" id="770531"/>
<dbReference type="KEGG" id="gga:770531"/>
<dbReference type="CTD" id="124491"/>
<dbReference type="VEuPathDB" id="HostDB:geneid_770531"/>
<dbReference type="eggNOG" id="KOG4349">
    <property type="taxonomic scope" value="Eukaryota"/>
</dbReference>
<dbReference type="InParanoid" id="Q5ZM31"/>
<dbReference type="OrthoDB" id="13807at2759"/>
<dbReference type="PhylomeDB" id="Q5ZM31"/>
<dbReference type="PRO" id="PR:Q5ZM31"/>
<dbReference type="Proteomes" id="UP000000539">
    <property type="component" value="Unassembled WGS sequence"/>
</dbReference>
<dbReference type="GO" id="GO:0005789">
    <property type="term" value="C:endoplasmic reticulum membrane"/>
    <property type="evidence" value="ECO:0000250"/>
    <property type="project" value="UniProtKB"/>
</dbReference>
<dbReference type="GO" id="GO:0005635">
    <property type="term" value="C:nuclear envelope"/>
    <property type="evidence" value="ECO:0000250"/>
    <property type="project" value="UniProtKB"/>
</dbReference>
<dbReference type="GO" id="GO:0071786">
    <property type="term" value="P:endoplasmic reticulum tubular network organization"/>
    <property type="evidence" value="ECO:0000250"/>
    <property type="project" value="UniProtKB"/>
</dbReference>
<dbReference type="InterPro" id="IPR019334">
    <property type="entry name" value="Transmembrane_pr_170"/>
</dbReference>
<dbReference type="PANTHER" id="PTHR22779">
    <property type="entry name" value="SD17342P"/>
    <property type="match status" value="1"/>
</dbReference>
<dbReference type="PANTHER" id="PTHR22779:SF2">
    <property type="entry name" value="TRANSMEMBRANE PROTEIN 170A"/>
    <property type="match status" value="1"/>
</dbReference>
<dbReference type="Pfam" id="PF10190">
    <property type="entry name" value="Tmemb_170"/>
    <property type="match status" value="1"/>
</dbReference>
<proteinExistence type="evidence at transcript level"/>
<reference key="1">
    <citation type="journal article" date="2005" name="Genome Biol.">
        <title>Full-length cDNAs from chicken bursal lymphocytes to facilitate gene function analysis.</title>
        <authorList>
            <person name="Caldwell R.B."/>
            <person name="Kierzek A.M."/>
            <person name="Arakawa H."/>
            <person name="Bezzubov Y."/>
            <person name="Zaim J."/>
            <person name="Fiedler P."/>
            <person name="Kutter S."/>
            <person name="Blagodatski A."/>
            <person name="Kostovska D."/>
            <person name="Koter M."/>
            <person name="Plachy J."/>
            <person name="Carninci P."/>
            <person name="Hayashizaki Y."/>
            <person name="Buerstedde J.-M."/>
        </authorList>
    </citation>
    <scope>NUCLEOTIDE SEQUENCE [LARGE SCALE MRNA]</scope>
    <source>
        <strain>CB</strain>
        <tissue>Bursa of Fabricius</tissue>
    </source>
</reference>
<gene>
    <name type="primary">TMEM170A</name>
    <name type="synonym">TMEM170</name>
    <name type="ORF">RCJMB04_3f9</name>
    <name type="ORF">RCJMB04_4c23</name>
</gene>
<sequence length="138" mass="14791">MEGSEAGGGGLLQQILSLRLVPRVGNGTTYSSPLSTFPEMWYGVFLWALVSSLSFHVPAALLALFTLRHHKYGRFMSVSLLLMGIVGPITAGILTSAAIAGVYRAAGKKMIPFEALIFEVGQTFCVVVVSFLRILATL</sequence>
<organism>
    <name type="scientific">Gallus gallus</name>
    <name type="common">Chicken</name>
    <dbReference type="NCBI Taxonomy" id="9031"/>
    <lineage>
        <taxon>Eukaryota</taxon>
        <taxon>Metazoa</taxon>
        <taxon>Chordata</taxon>
        <taxon>Craniata</taxon>
        <taxon>Vertebrata</taxon>
        <taxon>Euteleostomi</taxon>
        <taxon>Archelosauria</taxon>
        <taxon>Archosauria</taxon>
        <taxon>Dinosauria</taxon>
        <taxon>Saurischia</taxon>
        <taxon>Theropoda</taxon>
        <taxon>Coelurosauria</taxon>
        <taxon>Aves</taxon>
        <taxon>Neognathae</taxon>
        <taxon>Galloanserae</taxon>
        <taxon>Galliformes</taxon>
        <taxon>Phasianidae</taxon>
        <taxon>Phasianinae</taxon>
        <taxon>Gallus</taxon>
    </lineage>
</organism>
<feature type="chain" id="PRO_0000291761" description="Transmembrane protein 170A">
    <location>
        <begin position="1"/>
        <end position="138"/>
    </location>
</feature>
<feature type="topological domain" description="Lumenal" evidence="1">
    <location>
        <begin position="1"/>
        <end position="44"/>
    </location>
</feature>
<feature type="transmembrane region" description="Helical" evidence="2">
    <location>
        <begin position="45"/>
        <end position="65"/>
    </location>
</feature>
<feature type="topological domain" description="Cytoplasmic" evidence="1">
    <location>
        <begin position="66"/>
        <end position="79"/>
    </location>
</feature>
<feature type="transmembrane region" description="Helical" evidence="2">
    <location>
        <begin position="80"/>
        <end position="100"/>
    </location>
</feature>
<feature type="topological domain" description="Lumenal" evidence="1">
    <location>
        <begin position="101"/>
        <end position="110"/>
    </location>
</feature>
<feature type="transmembrane region" description="Helical" evidence="2">
    <location>
        <begin position="111"/>
        <end position="131"/>
    </location>
</feature>
<feature type="topological domain" description="Cytoplasmic" evidence="1">
    <location>
        <begin position="132"/>
        <end position="138"/>
    </location>
</feature>
<feature type="glycosylation site" description="N-linked (GlcNAc...) asparagine" evidence="2">
    <location>
        <position position="26"/>
    </location>
</feature>
<feature type="sequence conflict" description="In Ref. 1; CAG31242." evidence="3" ref="1">
    <original>L</original>
    <variation>P</variation>
    <location>
        <position position="53"/>
    </location>
</feature>
<feature type="sequence conflict" description="In Ref. 1; CAG31242." evidence="3" ref="1">
    <original>E</original>
    <variation>G</variation>
    <location>
        <position position="119"/>
    </location>
</feature>
<name>T170A_CHICK</name>
<keyword id="KW-0256">Endoplasmic reticulum</keyword>
<keyword id="KW-0325">Glycoprotein</keyword>
<keyword id="KW-0472">Membrane</keyword>
<keyword id="KW-0539">Nucleus</keyword>
<keyword id="KW-1185">Reference proteome</keyword>
<keyword id="KW-0812">Transmembrane</keyword>
<keyword id="KW-1133">Transmembrane helix</keyword>
<comment type="function">
    <text evidence="1">May regulate membrane morphogenesis in the endoplasmic reticulum (ER) by promoting ER sheet formation at the expense of ER tubules.</text>
</comment>
<comment type="subcellular location">
    <subcellularLocation>
        <location evidence="1">Endoplasmic reticulum membrane</location>
        <topology evidence="2">Multi-pass membrane protein</topology>
    </subcellularLocation>
    <subcellularLocation>
        <location evidence="1">Nucleus envelope</location>
    </subcellularLocation>
</comment>
<comment type="similarity">
    <text evidence="3">Belongs to the TMEM170 family.</text>
</comment>
<comment type="sequence caution" evidence="3">
    <conflict type="erroneous initiation">
        <sequence resource="EMBL-CDS" id="CAG31242"/>
    </conflict>
</comment>
<accession>Q5ZM31</accession>
<accession>Q5ZM01</accession>